<sequence>MSDSNNISSLYPPPPPYVKFFTKDNLERLAEYQSSHVTTDPEQITCELDFLIPPPVPSAGHYRAFGSVWQVKDELPDLETVGLRNLYDDRGQHGNNYQYKIKELHKLLKSLLLNMLELVSVLSVNPERFPDKVEHIRTILFNIHHLLNEYRPHQSRESLIMLLEEQLEHKKEEIANIHAICDKVQAKLAAMCKQYIADD</sequence>
<dbReference type="EMBL" id="AE016817">
    <property type="protein sequence ID" value="AAS51738.1"/>
    <property type="molecule type" value="Genomic_DNA"/>
</dbReference>
<dbReference type="RefSeq" id="NP_983914.1">
    <property type="nucleotide sequence ID" value="NM_209267.1"/>
</dbReference>
<dbReference type="SMR" id="Q75AV2"/>
<dbReference type="FunCoup" id="Q75AV2">
    <property type="interactions" value="807"/>
</dbReference>
<dbReference type="STRING" id="284811.Q75AV2"/>
<dbReference type="EnsemblFungi" id="AAS51738">
    <property type="protein sequence ID" value="AAS51738"/>
    <property type="gene ID" value="AGOS_ADL182C"/>
</dbReference>
<dbReference type="GeneID" id="4620056"/>
<dbReference type="KEGG" id="ago:AGOS_ADL182C"/>
<dbReference type="eggNOG" id="KOG0570">
    <property type="taxonomic scope" value="Eukaryota"/>
</dbReference>
<dbReference type="HOGENOM" id="CLU_065214_4_0_1"/>
<dbReference type="InParanoid" id="Q75AV2"/>
<dbReference type="OMA" id="MMQDHLD"/>
<dbReference type="OrthoDB" id="10253553at2759"/>
<dbReference type="Proteomes" id="UP000000591">
    <property type="component" value="Chromosome IV"/>
</dbReference>
<dbReference type="GO" id="GO:0070847">
    <property type="term" value="C:core mediator complex"/>
    <property type="evidence" value="ECO:0000318"/>
    <property type="project" value="GO_Central"/>
</dbReference>
<dbReference type="GO" id="GO:0016592">
    <property type="term" value="C:mediator complex"/>
    <property type="evidence" value="ECO:0000318"/>
    <property type="project" value="GO_Central"/>
</dbReference>
<dbReference type="GO" id="GO:0003713">
    <property type="term" value="F:transcription coactivator activity"/>
    <property type="evidence" value="ECO:0007669"/>
    <property type="project" value="EnsemblFungi"/>
</dbReference>
<dbReference type="GO" id="GO:0000122">
    <property type="term" value="P:negative regulation of transcription by RNA polymerase II"/>
    <property type="evidence" value="ECO:0007669"/>
    <property type="project" value="EnsemblFungi"/>
</dbReference>
<dbReference type="GO" id="GO:0032968">
    <property type="term" value="P:positive regulation of transcription elongation by RNA polymerase II"/>
    <property type="evidence" value="ECO:0007669"/>
    <property type="project" value="EnsemblFungi"/>
</dbReference>
<dbReference type="GO" id="GO:0060261">
    <property type="term" value="P:positive regulation of transcription initiation by RNA polymerase II"/>
    <property type="evidence" value="ECO:0007669"/>
    <property type="project" value="EnsemblFungi"/>
</dbReference>
<dbReference type="GO" id="GO:0006357">
    <property type="term" value="P:regulation of transcription by RNA polymerase II"/>
    <property type="evidence" value="ECO:0000318"/>
    <property type="project" value="GO_Central"/>
</dbReference>
<dbReference type="GO" id="GO:0051123">
    <property type="term" value="P:RNA polymerase II preinitiation complex assembly"/>
    <property type="evidence" value="ECO:0007669"/>
    <property type="project" value="EnsemblFungi"/>
</dbReference>
<dbReference type="Gene3D" id="6.10.140.1520">
    <property type="match status" value="1"/>
</dbReference>
<dbReference type="Gene3D" id="6.10.140.200">
    <property type="match status" value="1"/>
</dbReference>
<dbReference type="InterPro" id="IPR037212">
    <property type="entry name" value="Med7/Med21-like"/>
</dbReference>
<dbReference type="InterPro" id="IPR009244">
    <property type="entry name" value="Mediatior_Med7"/>
</dbReference>
<dbReference type="InterPro" id="IPR044888">
    <property type="entry name" value="Mediatior_Med7_sf"/>
</dbReference>
<dbReference type="PANTHER" id="PTHR21428">
    <property type="entry name" value="MEDIATOR OF RNA POLYMERASE II TRANSCRIPTION SUBUNIT 7"/>
    <property type="match status" value="1"/>
</dbReference>
<dbReference type="PANTHER" id="PTHR21428:SF11">
    <property type="entry name" value="MEDIATOR OF RNA POLYMERASE II TRANSCRIPTION SUBUNIT 7"/>
    <property type="match status" value="1"/>
</dbReference>
<dbReference type="Pfam" id="PF05983">
    <property type="entry name" value="Med7"/>
    <property type="match status" value="1"/>
</dbReference>
<dbReference type="SUPFAM" id="SSF140718">
    <property type="entry name" value="Mediator hinge subcomplex-like"/>
    <property type="match status" value="1"/>
</dbReference>
<accession>Q75AV2</accession>
<name>MED7_EREGS</name>
<proteinExistence type="inferred from homology"/>
<gene>
    <name type="primary">MED7</name>
    <name type="ordered locus">ADL182C</name>
</gene>
<keyword id="KW-0010">Activator</keyword>
<keyword id="KW-0539">Nucleus</keyword>
<keyword id="KW-1185">Reference proteome</keyword>
<keyword id="KW-0804">Transcription</keyword>
<keyword id="KW-0805">Transcription regulation</keyword>
<protein>
    <recommendedName>
        <fullName>Mediator of RNA polymerase II transcription subunit 7</fullName>
    </recommendedName>
    <alternativeName>
        <fullName>Mediator complex subunit 7</fullName>
    </alternativeName>
</protein>
<organism>
    <name type="scientific">Eremothecium gossypii (strain ATCC 10895 / CBS 109.51 / FGSC 9923 / NRRL Y-1056)</name>
    <name type="common">Yeast</name>
    <name type="synonym">Ashbya gossypii</name>
    <dbReference type="NCBI Taxonomy" id="284811"/>
    <lineage>
        <taxon>Eukaryota</taxon>
        <taxon>Fungi</taxon>
        <taxon>Dikarya</taxon>
        <taxon>Ascomycota</taxon>
        <taxon>Saccharomycotina</taxon>
        <taxon>Saccharomycetes</taxon>
        <taxon>Saccharomycetales</taxon>
        <taxon>Saccharomycetaceae</taxon>
        <taxon>Eremothecium</taxon>
    </lineage>
</organism>
<reference key="1">
    <citation type="journal article" date="2004" name="Science">
        <title>The Ashbya gossypii genome as a tool for mapping the ancient Saccharomyces cerevisiae genome.</title>
        <authorList>
            <person name="Dietrich F.S."/>
            <person name="Voegeli S."/>
            <person name="Brachat S."/>
            <person name="Lerch A."/>
            <person name="Gates K."/>
            <person name="Steiner S."/>
            <person name="Mohr C."/>
            <person name="Poehlmann R."/>
            <person name="Luedi P."/>
            <person name="Choi S."/>
            <person name="Wing R.A."/>
            <person name="Flavier A."/>
            <person name="Gaffney T.D."/>
            <person name="Philippsen P."/>
        </authorList>
    </citation>
    <scope>NUCLEOTIDE SEQUENCE [LARGE SCALE GENOMIC DNA]</scope>
    <source>
        <strain>ATCC 10895 / CBS 109.51 / FGSC 9923 / NRRL Y-1056</strain>
    </source>
</reference>
<reference key="2">
    <citation type="journal article" date="2013" name="G3 (Bethesda)">
        <title>Genomes of Ashbya fungi isolated from insects reveal four mating-type loci, numerous translocations, lack of transposons, and distinct gene duplications.</title>
        <authorList>
            <person name="Dietrich F.S."/>
            <person name="Voegeli S."/>
            <person name="Kuo S."/>
            <person name="Philippsen P."/>
        </authorList>
    </citation>
    <scope>GENOME REANNOTATION</scope>
    <source>
        <strain>ATCC 10895 / CBS 109.51 / FGSC 9923 / NRRL Y-1056</strain>
    </source>
</reference>
<comment type="function">
    <text evidence="1">Component of the Mediator complex, a coactivator involved in the regulated transcription of nearly all RNA polymerase II-dependent genes. Mediator functions as a bridge to convey information from gene-specific regulatory proteins to the basal RNA polymerase II transcription machinery. Mediator is recruited to promoters by direct interactions with regulatory proteins and serves as a scaffold for the assembly of a functional preinitiation complex with RNA polymerase II and the general transcription factors (By similarity).</text>
</comment>
<comment type="subunit">
    <text evidence="1">Component of the Mediator complex.</text>
</comment>
<comment type="subcellular location">
    <subcellularLocation>
        <location evidence="1">Nucleus</location>
    </subcellularLocation>
</comment>
<comment type="similarity">
    <text evidence="2">Belongs to the Mediator complex subunit 7 family.</text>
</comment>
<feature type="chain" id="PRO_0000303190" description="Mediator of RNA polymerase II transcription subunit 7">
    <location>
        <begin position="1"/>
        <end position="199"/>
    </location>
</feature>
<evidence type="ECO:0000250" key="1"/>
<evidence type="ECO:0000305" key="2"/>